<proteinExistence type="evidence at protein level"/>
<name>PROL4_HUMAN</name>
<dbReference type="EMBL" id="S79048">
    <property type="protein sequence ID" value="AAB35174.1"/>
    <property type="molecule type" value="mRNA"/>
</dbReference>
<dbReference type="EMBL" id="AF530472">
    <property type="protein sequence ID" value="AAM94338.1"/>
    <property type="molecule type" value="mRNA"/>
</dbReference>
<dbReference type="EMBL" id="AK292934">
    <property type="protein sequence ID" value="BAF85623.1"/>
    <property type="molecule type" value="mRNA"/>
</dbReference>
<dbReference type="EMBL" id="AK292991">
    <property type="protein sequence ID" value="BAF85680.1"/>
    <property type="molecule type" value="mRNA"/>
</dbReference>
<dbReference type="EMBL" id="DB198298">
    <property type="status" value="NOT_ANNOTATED_CDS"/>
    <property type="molecule type" value="mRNA"/>
</dbReference>
<dbReference type="EMBL" id="AC006518">
    <property type="status" value="NOT_ANNOTATED_CDS"/>
    <property type="molecule type" value="Genomic_DNA"/>
</dbReference>
<dbReference type="EMBL" id="AC018630">
    <property type="status" value="NOT_ANNOTATED_CDS"/>
    <property type="molecule type" value="Genomic_DNA"/>
</dbReference>
<dbReference type="EMBL" id="AC134349">
    <property type="status" value="NOT_ANNOTATED_CDS"/>
    <property type="molecule type" value="Genomic_DNA"/>
</dbReference>
<dbReference type="EMBL" id="AC217021">
    <property type="status" value="NOT_ANNOTATED_CDS"/>
    <property type="molecule type" value="Genomic_DNA"/>
</dbReference>
<dbReference type="EMBL" id="AC242308">
    <property type="status" value="NOT_ANNOTATED_CDS"/>
    <property type="molecule type" value="Genomic_DNA"/>
</dbReference>
<dbReference type="EMBL" id="BC058035">
    <property type="protein sequence ID" value="AAH58035.1"/>
    <property type="molecule type" value="mRNA"/>
</dbReference>
<dbReference type="CCDS" id="CCDS41756.1">
    <molecule id="Q16378-1"/>
</dbReference>
<dbReference type="CCDS" id="CCDS55804.1">
    <molecule id="Q16378-2"/>
</dbReference>
<dbReference type="PIR" id="I54810">
    <property type="entry name" value="I54810"/>
</dbReference>
<dbReference type="RefSeq" id="NP_001092008.2">
    <molecule id="Q16378-2"/>
    <property type="nucleotide sequence ID" value="NM_001098538.3"/>
</dbReference>
<dbReference type="RefSeq" id="NP_009175.2">
    <molecule id="Q16378-1"/>
    <property type="nucleotide sequence ID" value="NM_007244.3"/>
</dbReference>
<dbReference type="BioGRID" id="116428">
    <property type="interactions" value="117"/>
</dbReference>
<dbReference type="FunCoup" id="Q16378">
    <property type="interactions" value="82"/>
</dbReference>
<dbReference type="IntAct" id="Q16378">
    <property type="interactions" value="32"/>
</dbReference>
<dbReference type="MINT" id="Q16378"/>
<dbReference type="STRING" id="9606.ENSP00000228811"/>
<dbReference type="iPTMnet" id="Q16378"/>
<dbReference type="PhosphoSitePlus" id="Q16378"/>
<dbReference type="BioMuta" id="PRR4"/>
<dbReference type="DMDM" id="317373525"/>
<dbReference type="jPOST" id="Q16378"/>
<dbReference type="MassIVE" id="Q16378"/>
<dbReference type="PaxDb" id="9606-ENSP00000228811"/>
<dbReference type="PeptideAtlas" id="Q16378"/>
<dbReference type="PRIDE" id="Q16378"/>
<dbReference type="ProteomicsDB" id="60865">
    <molecule id="Q16378-1"/>
</dbReference>
<dbReference type="Pumba" id="Q16378"/>
<dbReference type="Antibodypedia" id="50960">
    <property type="antibodies" value="19 antibodies from 14 providers"/>
</dbReference>
<dbReference type="DNASU" id="11272"/>
<dbReference type="Ensembl" id="ENST00000228811.8">
    <molecule id="Q16378-1"/>
    <property type="protein sequence ID" value="ENSP00000228811.4"/>
    <property type="gene ID" value="ENSG00000111215.12"/>
</dbReference>
<dbReference type="Ensembl" id="ENST00000544994.5">
    <molecule id="Q16378-2"/>
    <property type="protein sequence ID" value="ENSP00000438046.1"/>
    <property type="gene ID" value="ENSG00000111215.12"/>
</dbReference>
<dbReference type="Ensembl" id="ENST00000574424.5">
    <molecule id="Q16378-1"/>
    <property type="protein sequence ID" value="ENSP00000459468.1"/>
    <property type="gene ID" value="ENSG00000263247.6"/>
</dbReference>
<dbReference type="Ensembl" id="ENST00000576999.5">
    <molecule id="Q16378-2"/>
    <property type="protein sequence ID" value="ENSP00000461695.1"/>
    <property type="gene ID" value="ENSG00000263247.6"/>
</dbReference>
<dbReference type="Ensembl" id="ENST00000614435.2">
    <molecule id="Q16378-1"/>
    <property type="protein sequence ID" value="ENSP00000477689.1"/>
    <property type="gene ID" value="ENSG00000282269.1"/>
</dbReference>
<dbReference type="Ensembl" id="ENST00000632373.1">
    <molecule id="Q16378-2"/>
    <property type="protein sequence ID" value="ENSP00000487830.1"/>
    <property type="gene ID" value="ENSG00000282269.1"/>
</dbReference>
<dbReference type="GeneID" id="11272"/>
<dbReference type="KEGG" id="hsa:11272"/>
<dbReference type="MANE-Select" id="ENST00000228811.8">
    <property type="protein sequence ID" value="ENSP00000228811.4"/>
    <property type="RefSeq nucleotide sequence ID" value="NM_007244.3"/>
    <property type="RefSeq protein sequence ID" value="NP_009175.2"/>
</dbReference>
<dbReference type="UCSC" id="uc001qyz.5">
    <molecule id="Q16378-1"/>
    <property type="organism name" value="human"/>
</dbReference>
<dbReference type="AGR" id="HGNC:18020"/>
<dbReference type="CTD" id="11272"/>
<dbReference type="DisGeNET" id="11272"/>
<dbReference type="GeneCards" id="PRR4"/>
<dbReference type="HGNC" id="HGNC:18020">
    <property type="gene designation" value="PRR4"/>
</dbReference>
<dbReference type="HPA" id="ENSG00000111215">
    <property type="expression patterns" value="Tissue enriched (salivary)"/>
</dbReference>
<dbReference type="MIM" id="605359">
    <property type="type" value="gene"/>
</dbReference>
<dbReference type="neXtProt" id="NX_Q16378"/>
<dbReference type="OpenTargets" id="ENSG00000111215"/>
<dbReference type="PharmGKB" id="PA33806"/>
<dbReference type="VEuPathDB" id="HostDB:ENSG00000111215"/>
<dbReference type="eggNOG" id="ENOG502TED7">
    <property type="taxonomic scope" value="Eukaryota"/>
</dbReference>
<dbReference type="GeneTree" id="ENSGT00730000112173"/>
<dbReference type="HOGENOM" id="CLU_2849034_0_0_1"/>
<dbReference type="InParanoid" id="Q16378"/>
<dbReference type="OMA" id="CNQDDGP"/>
<dbReference type="PAN-GO" id="Q16378">
    <property type="GO annotations" value="0 GO annotations based on evolutionary models"/>
</dbReference>
<dbReference type="PhylomeDB" id="Q16378"/>
<dbReference type="PathwayCommons" id="Q16378"/>
<dbReference type="SignaLink" id="Q16378"/>
<dbReference type="BioGRID-ORCS" id="11272">
    <property type="hits" value="10 hits in 1150 CRISPR screens"/>
</dbReference>
<dbReference type="GeneWiki" id="PRR4"/>
<dbReference type="GenomeRNAi" id="11272"/>
<dbReference type="Pharos" id="Q16378">
    <property type="development level" value="Tbio"/>
</dbReference>
<dbReference type="PRO" id="PR:Q16378"/>
<dbReference type="Proteomes" id="UP000005640">
    <property type="component" value="Chromosome 12"/>
</dbReference>
<dbReference type="RNAct" id="Q16378">
    <property type="molecule type" value="protein"/>
</dbReference>
<dbReference type="Bgee" id="ENSG00000111215">
    <property type="expression patterns" value="Expressed in olfactory segment of nasal mucosa and 97 other cell types or tissues"/>
</dbReference>
<dbReference type="ExpressionAtlas" id="Q16378">
    <property type="expression patterns" value="baseline and differential"/>
</dbReference>
<dbReference type="GO" id="GO:0005615">
    <property type="term" value="C:extracellular space"/>
    <property type="evidence" value="ECO:0007005"/>
    <property type="project" value="UniProtKB"/>
</dbReference>
<dbReference type="GO" id="GO:0007601">
    <property type="term" value="P:visual perception"/>
    <property type="evidence" value="ECO:0000304"/>
    <property type="project" value="ProtInc"/>
</dbReference>
<dbReference type="InterPro" id="IPR026086">
    <property type="entry name" value="Pro-rich"/>
</dbReference>
<dbReference type="PANTHER" id="PTHR23203">
    <property type="entry name" value="PROLINE-RICH PROTEIN"/>
    <property type="match status" value="1"/>
</dbReference>
<dbReference type="PANTHER" id="PTHR23203:SF9">
    <property type="entry name" value="PROLINE-RICH PROTEIN 4"/>
    <property type="match status" value="1"/>
</dbReference>
<dbReference type="Pfam" id="PF15240">
    <property type="entry name" value="Pro-rich"/>
    <property type="match status" value="1"/>
</dbReference>
<dbReference type="SMART" id="SM01412">
    <property type="entry name" value="Pro-rich"/>
    <property type="match status" value="1"/>
</dbReference>
<accession>Q16378</accession>
<accession>A8KA69</accession>
<accession>F5H0D7</accession>
<accession>Q8NFB3</accession>
<feature type="signal peptide" evidence="1">
    <location>
        <begin position="1"/>
        <end position="16"/>
    </location>
</feature>
<feature type="chain" id="PRO_0000022115" description="Proline-rich protein 4">
    <location>
        <begin position="17"/>
        <end position="134"/>
    </location>
</feature>
<feature type="region of interest" description="Disordered" evidence="2">
    <location>
        <begin position="28"/>
        <end position="134"/>
    </location>
</feature>
<feature type="compositionally biased region" description="Pro residues" evidence="2">
    <location>
        <begin position="47"/>
        <end position="59"/>
    </location>
</feature>
<feature type="compositionally biased region" description="Polar residues" evidence="2">
    <location>
        <begin position="110"/>
        <end position="119"/>
    </location>
</feature>
<feature type="compositionally biased region" description="Basic and acidic residues" evidence="2">
    <location>
        <begin position="120"/>
        <end position="134"/>
    </location>
</feature>
<feature type="splice variant" id="VSP_044635" description="In isoform 2." evidence="6">
    <original>DVEDSSQRPDQGPQRPPPEGLLPRPPGDSGNQDDGPQQRPPKPGGHHRHPPPPPFQNQQRPPRRGHRQLSLPRFPSVSLQEASSFFQRDRPARHPQEQPLW</original>
    <variation>ACRKHHHSSRGTDQQDIPRSNHSGNLEFSGRK</variation>
    <location>
        <begin position="34"/>
        <end position="134"/>
    </location>
</feature>
<feature type="sequence variant" id="VAR_027926" description="In dbSNP:rs1063193." evidence="3 4 5">
    <original>R</original>
    <variation>Q</variation>
    <location>
        <position position="96"/>
    </location>
</feature>
<feature type="sequence variant" id="VAR_027927" description="In dbSNP:rs1047699." evidence="3 4 5">
    <original>Q</original>
    <variation>R</variation>
    <location>
        <position position="120"/>
    </location>
</feature>
<feature type="sequence conflict" description="In Ref. 3; DB198298." evidence="7" ref="3">
    <original>R</original>
    <variation>G</variation>
    <location sequence="Q16378-2">
        <position position="43"/>
    </location>
</feature>
<sequence length="134" mass="15097">MLLVLLSVVLLALSSAQSTDNDVNYEDFTFTIPDVEDSSQRPDQGPQRPPPEGLLPRPPGDSGNQDDGPQQRPPKPGGHHRHPPPPPFQNQQRPPRRGHRQLSLPRFPSVSLQEASSFFQRDRPARHPQEQPLW</sequence>
<gene>
    <name type="primary">PRR4</name>
    <name type="synonym">LPRP</name>
    <name type="synonym">PROL4</name>
</gene>
<keyword id="KW-0025">Alternative splicing</keyword>
<keyword id="KW-0903">Direct protein sequencing</keyword>
<keyword id="KW-1267">Proteomics identification</keyword>
<keyword id="KW-1185">Reference proteome</keyword>
<keyword id="KW-0964">Secreted</keyword>
<keyword id="KW-0732">Signal</keyword>
<reference key="1">
    <citation type="journal article" date="1995" name="Invest. Ophthalmol. Vis. Sci.">
        <title>A major human lacrimal gland mRNA encodes a new proline-rich protein family member.</title>
        <authorList>
            <person name="Dickinson D.P."/>
            <person name="Thiesse M."/>
        </authorList>
    </citation>
    <scope>NUCLEOTIDE SEQUENCE [MRNA] (ISOFORM 1)</scope>
    <scope>TISSUE SPECIFICITY</scope>
    <scope>VARIANTS GLN-96 AND ARG-120</scope>
    <source>
        <tissue>Lacrimal gland</tissue>
    </source>
</reference>
<reference key="2">
    <citation type="submission" date="2002-07" db="EMBL/GenBank/DDBJ databases">
        <title>Isolation of differentially expressed genes in nasopharyngeal carcinoma.</title>
        <authorList>
            <person name="Zhang B.-C."/>
            <person name="Li G.-Y."/>
        </authorList>
    </citation>
    <scope>NUCLEOTIDE SEQUENCE [MRNA] (ISOFORM 1)</scope>
</reference>
<reference key="3">
    <citation type="journal article" date="2004" name="Nat. Genet.">
        <title>Complete sequencing and characterization of 21,243 full-length human cDNAs.</title>
        <authorList>
            <person name="Ota T."/>
            <person name="Suzuki Y."/>
            <person name="Nishikawa T."/>
            <person name="Otsuki T."/>
            <person name="Sugiyama T."/>
            <person name="Irie R."/>
            <person name="Wakamatsu A."/>
            <person name="Hayashi K."/>
            <person name="Sato H."/>
            <person name="Nagai K."/>
            <person name="Kimura K."/>
            <person name="Makita H."/>
            <person name="Sekine M."/>
            <person name="Obayashi M."/>
            <person name="Nishi T."/>
            <person name="Shibahara T."/>
            <person name="Tanaka T."/>
            <person name="Ishii S."/>
            <person name="Yamamoto J."/>
            <person name="Saito K."/>
            <person name="Kawai Y."/>
            <person name="Isono Y."/>
            <person name="Nakamura Y."/>
            <person name="Nagahari K."/>
            <person name="Murakami K."/>
            <person name="Yasuda T."/>
            <person name="Iwayanagi T."/>
            <person name="Wagatsuma M."/>
            <person name="Shiratori A."/>
            <person name="Sudo H."/>
            <person name="Hosoiri T."/>
            <person name="Kaku Y."/>
            <person name="Kodaira H."/>
            <person name="Kondo H."/>
            <person name="Sugawara M."/>
            <person name="Takahashi M."/>
            <person name="Kanda K."/>
            <person name="Yokoi T."/>
            <person name="Furuya T."/>
            <person name="Kikkawa E."/>
            <person name="Omura Y."/>
            <person name="Abe K."/>
            <person name="Kamihara K."/>
            <person name="Katsuta N."/>
            <person name="Sato K."/>
            <person name="Tanikawa M."/>
            <person name="Yamazaki M."/>
            <person name="Ninomiya K."/>
            <person name="Ishibashi T."/>
            <person name="Yamashita H."/>
            <person name="Murakawa K."/>
            <person name="Fujimori K."/>
            <person name="Tanai H."/>
            <person name="Kimata M."/>
            <person name="Watanabe M."/>
            <person name="Hiraoka S."/>
            <person name="Chiba Y."/>
            <person name="Ishida S."/>
            <person name="Ono Y."/>
            <person name="Takiguchi S."/>
            <person name="Watanabe S."/>
            <person name="Yosida M."/>
            <person name="Hotuta T."/>
            <person name="Kusano J."/>
            <person name="Kanehori K."/>
            <person name="Takahashi-Fujii A."/>
            <person name="Hara H."/>
            <person name="Tanase T.-O."/>
            <person name="Nomura Y."/>
            <person name="Togiya S."/>
            <person name="Komai F."/>
            <person name="Hara R."/>
            <person name="Takeuchi K."/>
            <person name="Arita M."/>
            <person name="Imose N."/>
            <person name="Musashino K."/>
            <person name="Yuuki H."/>
            <person name="Oshima A."/>
            <person name="Sasaki N."/>
            <person name="Aotsuka S."/>
            <person name="Yoshikawa Y."/>
            <person name="Matsunawa H."/>
            <person name="Ichihara T."/>
            <person name="Shiohata N."/>
            <person name="Sano S."/>
            <person name="Moriya S."/>
            <person name="Momiyama H."/>
            <person name="Satoh N."/>
            <person name="Takami S."/>
            <person name="Terashima Y."/>
            <person name="Suzuki O."/>
            <person name="Nakagawa S."/>
            <person name="Senoh A."/>
            <person name="Mizoguchi H."/>
            <person name="Goto Y."/>
            <person name="Shimizu F."/>
            <person name="Wakebe H."/>
            <person name="Hishigaki H."/>
            <person name="Watanabe T."/>
            <person name="Sugiyama A."/>
            <person name="Takemoto M."/>
            <person name="Kawakami B."/>
            <person name="Yamazaki M."/>
            <person name="Watanabe K."/>
            <person name="Kumagai A."/>
            <person name="Itakura S."/>
            <person name="Fukuzumi Y."/>
            <person name="Fujimori Y."/>
            <person name="Komiyama M."/>
            <person name="Tashiro H."/>
            <person name="Tanigami A."/>
            <person name="Fujiwara T."/>
            <person name="Ono T."/>
            <person name="Yamada K."/>
            <person name="Fujii Y."/>
            <person name="Ozaki K."/>
            <person name="Hirao M."/>
            <person name="Ohmori Y."/>
            <person name="Kawabata A."/>
            <person name="Hikiji T."/>
            <person name="Kobatake N."/>
            <person name="Inagaki H."/>
            <person name="Ikema Y."/>
            <person name="Okamoto S."/>
            <person name="Okitani R."/>
            <person name="Kawakami T."/>
            <person name="Noguchi S."/>
            <person name="Itoh T."/>
            <person name="Shigeta K."/>
            <person name="Senba T."/>
            <person name="Matsumura K."/>
            <person name="Nakajima Y."/>
            <person name="Mizuno T."/>
            <person name="Morinaga M."/>
            <person name="Sasaki M."/>
            <person name="Togashi T."/>
            <person name="Oyama M."/>
            <person name="Hata H."/>
            <person name="Watanabe M."/>
            <person name="Komatsu T."/>
            <person name="Mizushima-Sugano J."/>
            <person name="Satoh T."/>
            <person name="Shirai Y."/>
            <person name="Takahashi Y."/>
            <person name="Nakagawa K."/>
            <person name="Okumura K."/>
            <person name="Nagase T."/>
            <person name="Nomura N."/>
            <person name="Kikuchi H."/>
            <person name="Masuho Y."/>
            <person name="Yamashita R."/>
            <person name="Nakai K."/>
            <person name="Yada T."/>
            <person name="Nakamura Y."/>
            <person name="Ohara O."/>
            <person name="Isogai T."/>
            <person name="Sugano S."/>
        </authorList>
    </citation>
    <scope>NUCLEOTIDE SEQUENCE [LARGE SCALE MRNA] (ISOFORMS 1 AND 2)</scope>
    <scope>VARIANTS GLN-96 AND ARG-120</scope>
    <source>
        <tissue>Trachea</tissue>
    </source>
</reference>
<reference key="4">
    <citation type="journal article" date="2006" name="Nature">
        <title>The finished DNA sequence of human chromosome 12.</title>
        <authorList>
            <person name="Scherer S.E."/>
            <person name="Muzny D.M."/>
            <person name="Buhay C.J."/>
            <person name="Chen R."/>
            <person name="Cree A."/>
            <person name="Ding Y."/>
            <person name="Dugan-Rocha S."/>
            <person name="Gill R."/>
            <person name="Gunaratne P."/>
            <person name="Harris R.A."/>
            <person name="Hawes A.C."/>
            <person name="Hernandez J."/>
            <person name="Hodgson A.V."/>
            <person name="Hume J."/>
            <person name="Jackson A."/>
            <person name="Khan Z.M."/>
            <person name="Kovar-Smith C."/>
            <person name="Lewis L.R."/>
            <person name="Lozado R.J."/>
            <person name="Metzker M.L."/>
            <person name="Milosavljevic A."/>
            <person name="Miner G.R."/>
            <person name="Montgomery K.T."/>
            <person name="Morgan M.B."/>
            <person name="Nazareth L.V."/>
            <person name="Scott G."/>
            <person name="Sodergren E."/>
            <person name="Song X.-Z."/>
            <person name="Steffen D."/>
            <person name="Lovering R.C."/>
            <person name="Wheeler D.A."/>
            <person name="Worley K.C."/>
            <person name="Yuan Y."/>
            <person name="Zhang Z."/>
            <person name="Adams C.Q."/>
            <person name="Ansari-Lari M.A."/>
            <person name="Ayele M."/>
            <person name="Brown M.J."/>
            <person name="Chen G."/>
            <person name="Chen Z."/>
            <person name="Clerc-Blankenburg K.P."/>
            <person name="Davis C."/>
            <person name="Delgado O."/>
            <person name="Dinh H.H."/>
            <person name="Draper H."/>
            <person name="Gonzalez-Garay M.L."/>
            <person name="Havlak P."/>
            <person name="Jackson L.R."/>
            <person name="Jacob L.S."/>
            <person name="Kelly S.H."/>
            <person name="Li L."/>
            <person name="Li Z."/>
            <person name="Liu J."/>
            <person name="Liu W."/>
            <person name="Lu J."/>
            <person name="Maheshwari M."/>
            <person name="Nguyen B.-V."/>
            <person name="Okwuonu G.O."/>
            <person name="Pasternak S."/>
            <person name="Perez L.M."/>
            <person name="Plopper F.J.H."/>
            <person name="Santibanez J."/>
            <person name="Shen H."/>
            <person name="Tabor P.E."/>
            <person name="Verduzco D."/>
            <person name="Waldron L."/>
            <person name="Wang Q."/>
            <person name="Williams G.A."/>
            <person name="Zhang J."/>
            <person name="Zhou J."/>
            <person name="Allen C.C."/>
            <person name="Amin A.G."/>
            <person name="Anyalebechi V."/>
            <person name="Bailey M."/>
            <person name="Barbaria J.A."/>
            <person name="Bimage K.E."/>
            <person name="Bryant N.P."/>
            <person name="Burch P.E."/>
            <person name="Burkett C.E."/>
            <person name="Burrell K.L."/>
            <person name="Calderon E."/>
            <person name="Cardenas V."/>
            <person name="Carter K."/>
            <person name="Casias K."/>
            <person name="Cavazos I."/>
            <person name="Cavazos S.R."/>
            <person name="Ceasar H."/>
            <person name="Chacko J."/>
            <person name="Chan S.N."/>
            <person name="Chavez D."/>
            <person name="Christopoulos C."/>
            <person name="Chu J."/>
            <person name="Cockrell R."/>
            <person name="Cox C.D."/>
            <person name="Dang M."/>
            <person name="Dathorne S.R."/>
            <person name="David R."/>
            <person name="Davis C.M."/>
            <person name="Davy-Carroll L."/>
            <person name="Deshazo D.R."/>
            <person name="Donlin J.E."/>
            <person name="D'Souza L."/>
            <person name="Eaves K.A."/>
            <person name="Egan A."/>
            <person name="Emery-Cohen A.J."/>
            <person name="Escotto M."/>
            <person name="Flagg N."/>
            <person name="Forbes L.D."/>
            <person name="Gabisi A.M."/>
            <person name="Garza M."/>
            <person name="Hamilton C."/>
            <person name="Henderson N."/>
            <person name="Hernandez O."/>
            <person name="Hines S."/>
            <person name="Hogues M.E."/>
            <person name="Huang M."/>
            <person name="Idlebird D.G."/>
            <person name="Johnson R."/>
            <person name="Jolivet A."/>
            <person name="Jones S."/>
            <person name="Kagan R."/>
            <person name="King L.M."/>
            <person name="Leal B."/>
            <person name="Lebow H."/>
            <person name="Lee S."/>
            <person name="LeVan J.M."/>
            <person name="Lewis L.C."/>
            <person name="London P."/>
            <person name="Lorensuhewa L.M."/>
            <person name="Loulseged H."/>
            <person name="Lovett D.A."/>
            <person name="Lucier A."/>
            <person name="Lucier R.L."/>
            <person name="Ma J."/>
            <person name="Madu R.C."/>
            <person name="Mapua P."/>
            <person name="Martindale A.D."/>
            <person name="Martinez E."/>
            <person name="Massey E."/>
            <person name="Mawhiney S."/>
            <person name="Meador M.G."/>
            <person name="Mendez S."/>
            <person name="Mercado C."/>
            <person name="Mercado I.C."/>
            <person name="Merritt C.E."/>
            <person name="Miner Z.L."/>
            <person name="Minja E."/>
            <person name="Mitchell T."/>
            <person name="Mohabbat F."/>
            <person name="Mohabbat K."/>
            <person name="Montgomery B."/>
            <person name="Moore N."/>
            <person name="Morris S."/>
            <person name="Munidasa M."/>
            <person name="Ngo R.N."/>
            <person name="Nguyen N.B."/>
            <person name="Nickerson E."/>
            <person name="Nwaokelemeh O.O."/>
            <person name="Nwokenkwo S."/>
            <person name="Obregon M."/>
            <person name="Oguh M."/>
            <person name="Oragunye N."/>
            <person name="Oviedo R.J."/>
            <person name="Parish B.J."/>
            <person name="Parker D.N."/>
            <person name="Parrish J."/>
            <person name="Parks K.L."/>
            <person name="Paul H.A."/>
            <person name="Payton B.A."/>
            <person name="Perez A."/>
            <person name="Perrin W."/>
            <person name="Pickens A."/>
            <person name="Primus E.L."/>
            <person name="Pu L.-L."/>
            <person name="Puazo M."/>
            <person name="Quiles M.M."/>
            <person name="Quiroz J.B."/>
            <person name="Rabata D."/>
            <person name="Reeves K."/>
            <person name="Ruiz S.J."/>
            <person name="Shao H."/>
            <person name="Sisson I."/>
            <person name="Sonaike T."/>
            <person name="Sorelle R.P."/>
            <person name="Sutton A.E."/>
            <person name="Svatek A.F."/>
            <person name="Svetz L.A."/>
            <person name="Tamerisa K.S."/>
            <person name="Taylor T.R."/>
            <person name="Teague B."/>
            <person name="Thomas N."/>
            <person name="Thorn R.D."/>
            <person name="Trejos Z.Y."/>
            <person name="Trevino B.K."/>
            <person name="Ukegbu O.N."/>
            <person name="Urban J.B."/>
            <person name="Vasquez L.I."/>
            <person name="Vera V.A."/>
            <person name="Villasana D.M."/>
            <person name="Wang L."/>
            <person name="Ward-Moore S."/>
            <person name="Warren J.T."/>
            <person name="Wei X."/>
            <person name="White F."/>
            <person name="Williamson A.L."/>
            <person name="Wleczyk R."/>
            <person name="Wooden H.S."/>
            <person name="Wooden S.H."/>
            <person name="Yen J."/>
            <person name="Yoon L."/>
            <person name="Yoon V."/>
            <person name="Zorrilla S.E."/>
            <person name="Nelson D."/>
            <person name="Kucherlapati R."/>
            <person name="Weinstock G."/>
            <person name="Gibbs R.A."/>
        </authorList>
    </citation>
    <scope>NUCLEOTIDE SEQUENCE [LARGE SCALE GENOMIC DNA]</scope>
</reference>
<reference key="5">
    <citation type="journal article" date="2004" name="Genome Res.">
        <title>The status, quality, and expansion of the NIH full-length cDNA project: the Mammalian Gene Collection (MGC).</title>
        <authorList>
            <consortium name="The MGC Project Team"/>
        </authorList>
    </citation>
    <scope>NUCLEOTIDE SEQUENCE [LARGE SCALE MRNA] (ISOFORM 1)</scope>
    <scope>VARIANTS GLN-96 AND ARG-120</scope>
</reference>
<reference key="6">
    <citation type="journal article" date="2015" name="J. Proteome Res.">
        <title>Human basal tear peptidome characterization by CID, HCD, and ETD followed by in silico and in vitro analyses for antimicrobial peptide identification.</title>
        <authorList>
            <person name="Azkargorta M."/>
            <person name="Soria J."/>
            <person name="Ojeda C."/>
            <person name="Guzman F."/>
            <person name="Acera A."/>
            <person name="Iloro I."/>
            <person name="Suarez T."/>
            <person name="Elortza F."/>
        </authorList>
    </citation>
    <scope>PROTEIN SEQUENCE OF 55-134</scope>
    <scope>IDENTIFICATION BY MASS SPECTROMETRY</scope>
    <source>
        <tissue>Tear</tissue>
    </source>
</reference>
<reference key="7">
    <citation type="journal article" date="2003" name="Nat. Biotechnol.">
        <title>Exploring proteomes and analyzing protein processing by mass spectrometric identification of sorted N-terminal peptides.</title>
        <authorList>
            <person name="Gevaert K."/>
            <person name="Goethals M."/>
            <person name="Martens L."/>
            <person name="Van Damme J."/>
            <person name="Staes A."/>
            <person name="Thomas G.R."/>
            <person name="Vandekerckhove J."/>
        </authorList>
    </citation>
    <scope>PROTEIN SEQUENCE OF 122-134</scope>
    <source>
        <tissue>Platelet</tissue>
    </source>
</reference>
<protein>
    <recommendedName>
        <fullName>Proline-rich protein 4</fullName>
    </recommendedName>
    <alternativeName>
        <fullName>Lacrimal proline-rich protein</fullName>
    </alternativeName>
    <alternativeName>
        <fullName>Nasopharyngeal carcinoma-associated proline-rich protein 4</fullName>
    </alternativeName>
</protein>
<comment type="interaction">
    <interactant intactId="EBI-738624">
        <id>Q16378</id>
    </interactant>
    <interactant intactId="EBI-2515857">
        <id>O43681</id>
        <label>GET3</label>
    </interactant>
    <organismsDiffer>false</organismsDiffer>
    <experiments>3</experiments>
</comment>
<comment type="interaction">
    <interactant intactId="EBI-738624">
        <id>Q16378</id>
    </interactant>
    <interactant intactId="EBI-8070286">
        <id>O43561-2</id>
        <label>LAT</label>
    </interactant>
    <organismsDiffer>false</organismsDiffer>
    <experiments>3</experiments>
</comment>
<comment type="interaction">
    <interactant intactId="EBI-738624">
        <id>Q16378</id>
    </interactant>
    <interactant intactId="EBI-740987">
        <id>Q9NQG6</id>
        <label>MIEF1</label>
    </interactant>
    <organismsDiffer>false</organismsDiffer>
    <experiments>3</experiments>
</comment>
<comment type="interaction">
    <interactant intactId="EBI-738624">
        <id>Q16378</id>
    </interactant>
    <interactant intactId="EBI-744081">
        <id>Q96EQ0</id>
        <label>SGTB</label>
    </interactant>
    <organismsDiffer>false</organismsDiffer>
    <experiments>3</experiments>
</comment>
<comment type="interaction">
    <interactant intactId="EBI-738624">
        <id>Q16378</id>
    </interactant>
    <interactant intactId="EBI-741480">
        <id>Q9UMX0</id>
        <label>UBQLN1</label>
    </interactant>
    <organismsDiffer>false</organismsDiffer>
    <experiments>3</experiments>
</comment>
<comment type="interaction">
    <interactant intactId="EBI-738624">
        <id>Q16378</id>
    </interactant>
    <interactant intactId="EBI-947187">
        <id>Q9UHD9</id>
        <label>UBQLN2</label>
    </interactant>
    <organismsDiffer>false</organismsDiffer>
    <experiments>6</experiments>
</comment>
<comment type="subcellular location">
    <subcellularLocation>
        <location>Secreted</location>
    </subcellularLocation>
</comment>
<comment type="alternative products">
    <event type="alternative splicing"/>
    <isoform>
        <id>Q16378-1</id>
        <name>1</name>
        <sequence type="displayed"/>
    </isoform>
    <isoform>
        <id>Q16378-2</id>
        <name>2</name>
        <sequence type="described" ref="VSP_044635"/>
    </isoform>
</comment>
<comment type="tissue specificity">
    <text evidence="5">Abundantly expressed in lacrimal gland where it is found in the acinar cells but not in the intralobular ducts. Also found in the submandibular gland, the parotid and sublingual glands.</text>
</comment>
<organism>
    <name type="scientific">Homo sapiens</name>
    <name type="common">Human</name>
    <dbReference type="NCBI Taxonomy" id="9606"/>
    <lineage>
        <taxon>Eukaryota</taxon>
        <taxon>Metazoa</taxon>
        <taxon>Chordata</taxon>
        <taxon>Craniata</taxon>
        <taxon>Vertebrata</taxon>
        <taxon>Euteleostomi</taxon>
        <taxon>Mammalia</taxon>
        <taxon>Eutheria</taxon>
        <taxon>Euarchontoglires</taxon>
        <taxon>Primates</taxon>
        <taxon>Haplorrhini</taxon>
        <taxon>Catarrhini</taxon>
        <taxon>Hominidae</taxon>
        <taxon>Homo</taxon>
    </lineage>
</organism>
<evidence type="ECO:0000255" key="1"/>
<evidence type="ECO:0000256" key="2">
    <source>
        <dbReference type="SAM" id="MobiDB-lite"/>
    </source>
</evidence>
<evidence type="ECO:0000269" key="3">
    <source>
    </source>
</evidence>
<evidence type="ECO:0000269" key="4">
    <source>
    </source>
</evidence>
<evidence type="ECO:0000269" key="5">
    <source>
    </source>
</evidence>
<evidence type="ECO:0000303" key="6">
    <source>
    </source>
</evidence>
<evidence type="ECO:0000305" key="7"/>